<protein>
    <recommendedName>
        <fullName evidence="17">Protein brain tumor</fullName>
    </recommendedName>
</protein>
<reference key="1">
    <citation type="journal article" date="2000" name="Oncogene">
        <title>Mutations in the beta-propeller domain of the Drosophila brain tumor (brat) protein induce neoplasm in the larval brain.</title>
        <authorList>
            <person name="Arama E."/>
            <person name="Dickman D."/>
            <person name="Kimchie Z."/>
            <person name="Shearn A."/>
            <person name="Lev Z."/>
        </authorList>
    </citation>
    <scope>NUCLEOTIDE SEQUENCE [GENOMIC DNA / MRNA]</scope>
    <scope>TISSUE SPECIFICITY</scope>
    <scope>MUTAGENESIS OF HIS-802 AND GLY-860</scope>
</reference>
<reference key="2">
    <citation type="submission" date="1999-01" db="EMBL/GenBank/DDBJ databases">
        <title>Putative Drosophila transcription factor.</title>
        <authorList>
            <person name="Lukacsovich T."/>
        </authorList>
    </citation>
    <scope>NUCLEOTIDE SEQUENCE [MRNA]</scope>
</reference>
<reference key="3">
    <citation type="journal article" date="2000" name="Science">
        <title>The genome sequence of Drosophila melanogaster.</title>
        <authorList>
            <person name="Adams M.D."/>
            <person name="Celniker S.E."/>
            <person name="Holt R.A."/>
            <person name="Evans C.A."/>
            <person name="Gocayne J.D."/>
            <person name="Amanatides P.G."/>
            <person name="Scherer S.E."/>
            <person name="Li P.W."/>
            <person name="Hoskins R.A."/>
            <person name="Galle R.F."/>
            <person name="George R.A."/>
            <person name="Lewis S.E."/>
            <person name="Richards S."/>
            <person name="Ashburner M."/>
            <person name="Henderson S.N."/>
            <person name="Sutton G.G."/>
            <person name="Wortman J.R."/>
            <person name="Yandell M.D."/>
            <person name="Zhang Q."/>
            <person name="Chen L.X."/>
            <person name="Brandon R.C."/>
            <person name="Rogers Y.-H.C."/>
            <person name="Blazej R.G."/>
            <person name="Champe M."/>
            <person name="Pfeiffer B.D."/>
            <person name="Wan K.H."/>
            <person name="Doyle C."/>
            <person name="Baxter E.G."/>
            <person name="Helt G."/>
            <person name="Nelson C.R."/>
            <person name="Miklos G.L.G."/>
            <person name="Abril J.F."/>
            <person name="Agbayani A."/>
            <person name="An H.-J."/>
            <person name="Andrews-Pfannkoch C."/>
            <person name="Baldwin D."/>
            <person name="Ballew R.M."/>
            <person name="Basu A."/>
            <person name="Baxendale J."/>
            <person name="Bayraktaroglu L."/>
            <person name="Beasley E.M."/>
            <person name="Beeson K.Y."/>
            <person name="Benos P.V."/>
            <person name="Berman B.P."/>
            <person name="Bhandari D."/>
            <person name="Bolshakov S."/>
            <person name="Borkova D."/>
            <person name="Botchan M.R."/>
            <person name="Bouck J."/>
            <person name="Brokstein P."/>
            <person name="Brottier P."/>
            <person name="Burtis K.C."/>
            <person name="Busam D.A."/>
            <person name="Butler H."/>
            <person name="Cadieu E."/>
            <person name="Center A."/>
            <person name="Chandra I."/>
            <person name="Cherry J.M."/>
            <person name="Cawley S."/>
            <person name="Dahlke C."/>
            <person name="Davenport L.B."/>
            <person name="Davies P."/>
            <person name="de Pablos B."/>
            <person name="Delcher A."/>
            <person name="Deng Z."/>
            <person name="Mays A.D."/>
            <person name="Dew I."/>
            <person name="Dietz S.M."/>
            <person name="Dodson K."/>
            <person name="Doup L.E."/>
            <person name="Downes M."/>
            <person name="Dugan-Rocha S."/>
            <person name="Dunkov B.C."/>
            <person name="Dunn P."/>
            <person name="Durbin K.J."/>
            <person name="Evangelista C.C."/>
            <person name="Ferraz C."/>
            <person name="Ferriera S."/>
            <person name="Fleischmann W."/>
            <person name="Fosler C."/>
            <person name="Gabrielian A.E."/>
            <person name="Garg N.S."/>
            <person name="Gelbart W.M."/>
            <person name="Glasser K."/>
            <person name="Glodek A."/>
            <person name="Gong F."/>
            <person name="Gorrell J.H."/>
            <person name="Gu Z."/>
            <person name="Guan P."/>
            <person name="Harris M."/>
            <person name="Harris N.L."/>
            <person name="Harvey D.A."/>
            <person name="Heiman T.J."/>
            <person name="Hernandez J.R."/>
            <person name="Houck J."/>
            <person name="Hostin D."/>
            <person name="Houston K.A."/>
            <person name="Howland T.J."/>
            <person name="Wei M.-H."/>
            <person name="Ibegwam C."/>
            <person name="Jalali M."/>
            <person name="Kalush F."/>
            <person name="Karpen G.H."/>
            <person name="Ke Z."/>
            <person name="Kennison J.A."/>
            <person name="Ketchum K.A."/>
            <person name="Kimmel B.E."/>
            <person name="Kodira C.D."/>
            <person name="Kraft C.L."/>
            <person name="Kravitz S."/>
            <person name="Kulp D."/>
            <person name="Lai Z."/>
            <person name="Lasko P."/>
            <person name="Lei Y."/>
            <person name="Levitsky A.A."/>
            <person name="Li J.H."/>
            <person name="Li Z."/>
            <person name="Liang Y."/>
            <person name="Lin X."/>
            <person name="Liu X."/>
            <person name="Mattei B."/>
            <person name="McIntosh T.C."/>
            <person name="McLeod M.P."/>
            <person name="McPherson D."/>
            <person name="Merkulov G."/>
            <person name="Milshina N.V."/>
            <person name="Mobarry C."/>
            <person name="Morris J."/>
            <person name="Moshrefi A."/>
            <person name="Mount S.M."/>
            <person name="Moy M."/>
            <person name="Murphy B."/>
            <person name="Murphy L."/>
            <person name="Muzny D.M."/>
            <person name="Nelson D.L."/>
            <person name="Nelson D.R."/>
            <person name="Nelson K.A."/>
            <person name="Nixon K."/>
            <person name="Nusskern D.R."/>
            <person name="Pacleb J.M."/>
            <person name="Palazzolo M."/>
            <person name="Pittman G.S."/>
            <person name="Pan S."/>
            <person name="Pollard J."/>
            <person name="Puri V."/>
            <person name="Reese M.G."/>
            <person name="Reinert K."/>
            <person name="Remington K."/>
            <person name="Saunders R.D.C."/>
            <person name="Scheeler F."/>
            <person name="Shen H."/>
            <person name="Shue B.C."/>
            <person name="Siden-Kiamos I."/>
            <person name="Simpson M."/>
            <person name="Skupski M.P."/>
            <person name="Smith T.J."/>
            <person name="Spier E."/>
            <person name="Spradling A.C."/>
            <person name="Stapleton M."/>
            <person name="Strong R."/>
            <person name="Sun E."/>
            <person name="Svirskas R."/>
            <person name="Tector C."/>
            <person name="Turner R."/>
            <person name="Venter E."/>
            <person name="Wang A.H."/>
            <person name="Wang X."/>
            <person name="Wang Z.-Y."/>
            <person name="Wassarman D.A."/>
            <person name="Weinstock G.M."/>
            <person name="Weissenbach J."/>
            <person name="Williams S.M."/>
            <person name="Woodage T."/>
            <person name="Worley K.C."/>
            <person name="Wu D."/>
            <person name="Yang S."/>
            <person name="Yao Q.A."/>
            <person name="Ye J."/>
            <person name="Yeh R.-F."/>
            <person name="Zaveri J.S."/>
            <person name="Zhan M."/>
            <person name="Zhang G."/>
            <person name="Zhao Q."/>
            <person name="Zheng L."/>
            <person name="Zheng X.H."/>
            <person name="Zhong F.N."/>
            <person name="Zhong W."/>
            <person name="Zhou X."/>
            <person name="Zhu S.C."/>
            <person name="Zhu X."/>
            <person name="Smith H.O."/>
            <person name="Gibbs R.A."/>
            <person name="Myers E.W."/>
            <person name="Rubin G.M."/>
            <person name="Venter J.C."/>
        </authorList>
    </citation>
    <scope>NUCLEOTIDE SEQUENCE [LARGE SCALE GENOMIC DNA]</scope>
    <source>
        <strain>Berkeley</strain>
    </source>
</reference>
<reference key="4">
    <citation type="journal article" date="2002" name="Genome Biol.">
        <title>Annotation of the Drosophila melanogaster euchromatic genome: a systematic review.</title>
        <authorList>
            <person name="Misra S."/>
            <person name="Crosby M.A."/>
            <person name="Mungall C.J."/>
            <person name="Matthews B.B."/>
            <person name="Campbell K.S."/>
            <person name="Hradecky P."/>
            <person name="Huang Y."/>
            <person name="Kaminker J.S."/>
            <person name="Millburn G.H."/>
            <person name="Prochnik S.E."/>
            <person name="Smith C.D."/>
            <person name="Tupy J.L."/>
            <person name="Whitfield E.J."/>
            <person name="Bayraktaroglu L."/>
            <person name="Berman B.P."/>
            <person name="Bettencourt B.R."/>
            <person name="Celniker S.E."/>
            <person name="de Grey A.D.N.J."/>
            <person name="Drysdale R.A."/>
            <person name="Harris N.L."/>
            <person name="Richter J."/>
            <person name="Russo S."/>
            <person name="Schroeder A.J."/>
            <person name="Shu S.Q."/>
            <person name="Stapleton M."/>
            <person name="Yamada C."/>
            <person name="Ashburner M."/>
            <person name="Gelbart W.M."/>
            <person name="Rubin G.M."/>
            <person name="Lewis S.E."/>
        </authorList>
    </citation>
    <scope>GENOME REANNOTATION</scope>
    <source>
        <strain>Berkeley</strain>
    </source>
</reference>
<reference key="5">
    <citation type="journal article" date="2002" name="Genome Biol.">
        <title>A Drosophila full-length cDNA resource.</title>
        <authorList>
            <person name="Stapleton M."/>
            <person name="Carlson J.W."/>
            <person name="Brokstein P."/>
            <person name="Yu C."/>
            <person name="Champe M."/>
            <person name="George R.A."/>
            <person name="Guarin H."/>
            <person name="Kronmiller B."/>
            <person name="Pacleb J.M."/>
            <person name="Park S."/>
            <person name="Wan K.H."/>
            <person name="Rubin G.M."/>
            <person name="Celniker S.E."/>
        </authorList>
    </citation>
    <scope>NUCLEOTIDE SEQUENCE [LARGE SCALE MRNA]</scope>
    <source>
        <strain>Berkeley</strain>
        <tissue>Embryo</tissue>
        <tissue>Larva</tissue>
        <tissue>Pupae</tissue>
    </source>
</reference>
<reference key="6">
    <citation type="journal article" date="2005" name="Mol. Biol. Evol.">
        <title>Intragenic Hill-Robertson interference influences selection intensity on synonymous mutations in Drosophila.</title>
        <authorList>
            <person name="Comeron J.M."/>
            <person name="Guthrie T.B."/>
        </authorList>
    </citation>
    <scope>NUCLEOTIDE SEQUENCE [GENOMIC DNA] OF 8-1031</scope>
    <source>
        <strain>Ral1</strain>
    </source>
</reference>
<reference key="7">
    <citation type="journal article" date="2001" name="Genes Dev.">
        <title>Drosophila Brain tumor is a translational repressor.</title>
        <authorList>
            <person name="Sonoda J."/>
            <person name="Wharton R.P."/>
        </authorList>
    </citation>
    <scope>FUNCTION</scope>
    <scope>INTERACTION WITH PUM AND NANOS</scope>
    <scope>SUBCELLULAR LOCATION</scope>
    <scope>DOMAIN</scope>
</reference>
<reference key="8">
    <citation type="journal article" date="2002" name="Development">
        <title>The Drosophila melanogaster gene brain tumor negatively regulates cell growth and ribosomal RNA synthesis.</title>
        <authorList>
            <person name="Frank D.J."/>
            <person name="Edgar B.A."/>
            <person name="Roth M.B."/>
        </authorList>
    </citation>
    <scope>FUNCTION</scope>
</reference>
<reference key="9">
    <citation type="journal article" date="2006" name="Cell">
        <title>Asymmetric segregation of the tumor suppressor brat regulates self-renewal in Drosophila neural stem cells.</title>
        <authorList>
            <person name="Betschinger J."/>
            <person name="Mechtler K."/>
            <person name="Knoblich J.A."/>
        </authorList>
    </citation>
    <scope>FUNCTION</scope>
    <scope>INTERACTION WITH MIRA</scope>
    <scope>SUBCELLULAR LOCATION</scope>
    <scope>DISRUPTION PHENOTYPE</scope>
</reference>
<reference key="10">
    <citation type="journal article" date="2008" name="Dev. Cell">
        <title>The tumor suppressors Brat and Numb regulate transit-amplifying neuroblast lineages in Drosophila.</title>
        <authorList>
            <person name="Bowman S.K."/>
            <person name="Rolland V."/>
            <person name="Betschinger J."/>
            <person name="Kinsey K.A."/>
            <person name="Emery G."/>
            <person name="Knoblich J.A."/>
        </authorList>
    </citation>
    <scope>FUNCTION</scope>
    <scope>SUBCELLULAR LOCATION</scope>
    <scope>DISRUPTION PHENOTYPE</scope>
</reference>
<reference key="11">
    <citation type="journal article" date="2008" name="Nature">
        <title>Mei-P26 regulates microRNAs and cell growth in the Drosophila ovarian stem cell lineage.</title>
        <authorList>
            <person name="Neumueller R.A."/>
            <person name="Betschinger J."/>
            <person name="Fischer A."/>
            <person name="Bushati N."/>
            <person name="Poernbacher I."/>
            <person name="Mechtler K."/>
            <person name="Cohen S.M."/>
            <person name="Knoblich J.A."/>
        </authorList>
    </citation>
    <scope>INTERACTION WITH AGO1</scope>
</reference>
<reference key="12">
    <citation type="journal article" date="2011" name="Proc. Natl. Acad. Sci. U.S.A.">
        <title>Ets transcription factor Pointed promotes the generation of intermediate neural progenitors in Drosophila larval brains.</title>
        <authorList>
            <person name="Zhu S."/>
            <person name="Barshow S."/>
            <person name="Wildonger J."/>
            <person name="Jan L.Y."/>
            <person name="Jan Y.N."/>
        </authorList>
    </citation>
    <scope>FUNCTION</scope>
    <scope>DISRUPTION PHENOTYPE</scope>
</reference>
<reference key="13">
    <citation type="journal article" date="2014" name="Development">
        <title>Earmuff restricts progenitor cell potential by attenuating the competence to respond to self-renewal factors.</title>
        <authorList>
            <person name="Janssens D.H."/>
            <person name="Komori H."/>
            <person name="Grbac D."/>
            <person name="Chen K."/>
            <person name="Koe C.T."/>
            <person name="Wang H."/>
            <person name="Lee C.Y."/>
        </authorList>
    </citation>
    <scope>FUNCTION</scope>
</reference>
<reference key="14">
    <citation type="journal article" date="2014" name="Genetics">
        <title>Mei-P26 mediates tissue-specific responses to the Brat tumor suppressor and the dMyc proto-oncogene in Drosophila.</title>
        <authorList>
            <person name="Ferreira A."/>
            <person name="Boulan L."/>
            <person name="Perez L."/>
            <person name="Milan M."/>
        </authorList>
    </citation>
    <scope>FUNCTION</scope>
    <scope>DISRUPTION PHENOTYPE</scope>
</reference>
<reference key="15">
    <citation type="journal article" date="2024" name="EMBO Rep.">
        <title>Ribogenesis boosts controlled by HEATR1-MYC interplay promote transition into brain tumour growth.</title>
        <authorList>
            <person name="Diaz L.R."/>
            <person name="Gil-Ranedo J."/>
            <person name="Jaworek K.J."/>
            <person name="Nsek N."/>
            <person name="Marques J.P."/>
            <person name="Costa E."/>
            <person name="Hilton D.A."/>
            <person name="Bieluczyk H."/>
            <person name="Warrington O."/>
            <person name="Hanemann C.O."/>
            <person name="Futschik M.E."/>
            <person name="Bossing T."/>
            <person name="Barros C.S."/>
        </authorList>
    </citation>
    <scope>DISRUPTION PHENOTYPE</scope>
</reference>
<reference key="16">
    <citation type="journal article" date="2003" name="Genes Dev.">
        <title>Model of the brain tumor-Pumilio translation repressor complex.</title>
        <authorList>
            <person name="Edwards T.A."/>
            <person name="Wilkinson B.D."/>
            <person name="Wharton R.P."/>
            <person name="Aggarwal A.K."/>
        </authorList>
    </citation>
    <scope>X-RAY CRYSTALLOGRAPHY (1.95 ANGSTROMS) OF 757-1037</scope>
    <scope>FUNCTION</scope>
    <scope>MUTAGENESIS OF TYR-829; ARG-847; TYR-859; ARG-875; GLU-970 AND ASP-1012</scope>
</reference>
<accession>Q8MQJ9</accession>
<accession>A4V0U9</accession>
<accession>Q0E8P2</accession>
<accession>Q2XXZ6</accession>
<accession>Q8MR02</accession>
<accession>Q9U633</accession>
<accession>Q9U634</accession>
<accession>Q9U635</accession>
<accession>Q9U636</accession>
<accession>Q9Y1W4</accession>
<evidence type="ECO:0000255" key="1">
    <source>
        <dbReference type="PROSITE-ProRule" id="PRU00024"/>
    </source>
</evidence>
<evidence type="ECO:0000255" key="2">
    <source>
        <dbReference type="PROSITE-ProRule" id="PRU00504"/>
    </source>
</evidence>
<evidence type="ECO:0000256" key="3">
    <source>
        <dbReference type="SAM" id="MobiDB-lite"/>
    </source>
</evidence>
<evidence type="ECO:0000269" key="4">
    <source>
    </source>
</evidence>
<evidence type="ECO:0000269" key="5">
    <source>
    </source>
</evidence>
<evidence type="ECO:0000269" key="6">
    <source>
    </source>
</evidence>
<evidence type="ECO:0000269" key="7">
    <source>
    </source>
</evidence>
<evidence type="ECO:0000269" key="8">
    <source>
    </source>
</evidence>
<evidence type="ECO:0000269" key="9">
    <source>
    </source>
</evidence>
<evidence type="ECO:0000269" key="10">
    <source>
    </source>
</evidence>
<evidence type="ECO:0000269" key="11">
    <source>
    </source>
</evidence>
<evidence type="ECO:0000269" key="12">
    <source>
    </source>
</evidence>
<evidence type="ECO:0000269" key="13">
    <source>
    </source>
</evidence>
<evidence type="ECO:0000269" key="14">
    <source>
    </source>
</evidence>
<evidence type="ECO:0000305" key="15"/>
<evidence type="ECO:0000305" key="16">
    <source>
    </source>
</evidence>
<evidence type="ECO:0000312" key="17">
    <source>
        <dbReference type="FlyBase" id="FBgn0010300"/>
    </source>
</evidence>
<evidence type="ECO:0000312" key="18">
    <source>
        <dbReference type="Proteomes" id="UP000000803"/>
    </source>
</evidence>
<evidence type="ECO:0007829" key="19">
    <source>
        <dbReference type="PDB" id="1Q7F"/>
    </source>
</evidence>
<evidence type="ECO:0007829" key="20">
    <source>
        <dbReference type="PDB" id="5EX7"/>
    </source>
</evidence>
<evidence type="ECO:0007829" key="21">
    <source>
        <dbReference type="PDB" id="6J9R"/>
    </source>
</evidence>
<comment type="function">
    <text evidence="5 6 7 8 9 11 12 13">A NHL-domain family protein that functions as a translational repressor to inhibit cell proliferation (PubMed:11274060). Plays a central role in translation repression of hb mRNA by being recruited by nanos (nos) and pum to the Nanos Response Element (NRE), a 16 bp sequence in the hb mRNA 3'-UTR (PubMed:11274060). Probably recruited by other proteins to repress translation of other mRNAs in other tissues (PubMed:11274060). Negatively regulates expression of Myc in a 3'-UTR dependent manner in both neural progenitor and epithelial cells (PubMed:24990993). Regulates expression of mei-P26, possibly at transcriptional level (PubMed:24990993). Involved in the regulation of ribosomal RNA synthesis and cell growth (PubMed:11807032). Participates in abdominal segmentation and imaginal disk development (PubMed:11274060). During neuroblast division, segregates asymmetrically and inhibits self-renewal of one of the two daughter cells (PubMed:16564014). Together with the asymmetrically segregating transcription factor prospero ensures that the daughter cell will stop growing, exit the cell cycle, and differentiate into neurons possibly by modulating the function of dm in ganglion mother cells (GMC) (PubMed:11807032, PubMed:16564014). Restricts developmental potential of type II intermediary neuronal progenitor (INP) cells playing a role in proliferation and maturation of the neuroblasts (PubMed:14561773, PubMed:18342578, PubMed:22143802, PubMed:24550111).</text>
</comment>
<comment type="subunit">
    <text evidence="5 8 10">Interacts with nanos (nos) and pum (PubMed:11274060). Acts via the formation of a quaternary complex composed of pum, nanos, brat and the 3'-UTR mRNA of hb (PubMed:11274060). Not recruited by nanos and pum to cyclin B 3'-UTR mRNA (PubMed:11274060). Might interact with mira; the interaction seems to be important for brat localization during mitosis (PubMed:16564014). Interacts with Ago1 (PubMed:18528333).</text>
</comment>
<comment type="interaction">
    <interactant intactId="EBI-414123">
        <id>Q8MQJ9</id>
    </interactant>
    <interactant intactId="EBI-105513">
        <id>Q32KD4</id>
        <label>AGO1</label>
    </interactant>
    <organismsDiffer>false</organismsDiffer>
    <experiments>4</experiments>
</comment>
<comment type="subcellular location">
    <subcellularLocation>
        <location evidence="5 8">Cytoplasm</location>
    </subcellularLocation>
    <subcellularLocation>
        <location evidence="8 9">Cytoplasm</location>
        <location evidence="8 9">Cell cortex</location>
    </subcellularLocation>
    <text evidence="8 9">In embryonic and larval neuroblasts, colocalizes with mira throughout mitosis using it as an adapter to segregate into one of the two daughter cells during asymmetric cell division. Accumulates at the apical cell cortex in prophase, forms a basal crescent in metaphase, and segregates into the ganglion mother cell (GMC). It is cortical in telophase but becomes cytoplasmic in interphase after mira is degraded.</text>
</comment>
<comment type="tissue specificity">
    <text evidence="4">Expressed during embryogenesis, mainly in nervous tissues. Expressed in the embryonic central and peripheral nervous systems including the embryonic brain. In third instar larva it is expressed in the larval central nervous system including the brain and the ventral ganglion, in two glands (the ring gland and the salivary gland, and in parts of the foregut) the gastric caeca and the proventriculus.</text>
</comment>
<comment type="domain">
    <text evidence="5">The NHL repeats form six-bladed beta-propeller that mediate the interaction with the pumilio repeats of pum, and are essential for translational effector function.</text>
</comment>
<comment type="disruption phenotype">
    <text evidence="8 9 11 13 14">In larval brain, results in deregulated cell cycle and defective differentiation of immature intermediate neuroblast progenitors ultimately leading to overgrowth and proliferation (PubMed:16564014, PubMed:18342578). RNAi-mediated knockdown in the larval brain results in overproliferation of type II neuroblast cells on the dorsal side of the larval brains but had no effect in the type I neuroblast lineage in the ventral nerve cord (PubMed:18342578, PubMed:22143802). Conditional RNAi-mediated knockdown in type II neuroblast stem cells results in the same phenotype (PubMed:38225354). Intermediary neuronal progenitor (INP) cells destined to become tumor initiator cells have enlarged nucleoli, indicating increased ribogenesis (PubMed:38225354). RNAi-mediated knockdown results in reduced cell and tissue growth in larval wing imaginal discs resulting in reduced adult wing size (PubMed:24990993).</text>
</comment>
<comment type="miscellaneous">
    <text evidence="16">The neuroblast overproliferation phenotype of brat knockout mutants is used as a well characterized brain tumor model. Early stages of tumorigenesis can be investigated because the tumor initiating cells of the type II neural stem cell lineage are known.</text>
</comment>
<comment type="sequence caution" evidence="15">
    <conflict type="erroneous initiation">
        <sequence resource="EMBL-CDS" id="AAM76183"/>
    </conflict>
    <text>Extended N-terminus.</text>
</comment>
<sequence>MASSPTPSLDSMRGGANSIESYEHAGYLSDSPLTLSGSSPPASDSAICSDEYTGGSSVKSRSEVTVINGHHPISASVSSSSSASSSSCSSSSSSSSSSSSSSSSTSGLSGCGSTSSSVISANNVASSNGPGVIGSNLQSSNNGGNSGISSLVVGAGKGSNSSSNSSSSNTSANGSPPRCTACKSKCSDAVAKCFECQSYLCANCVTAHEFMHCFNGHNVCLIKGFEASTTGTPLSVGSPSNNPASNEFKYASSLTMMLQQQQQLDSQQQQQQQQLLPAQPMSQLSKIVLAAAAQANSQEQQREDSIYGSLHPQQQQQQQQQQQRQLFCPRHKQELLKFSCRTCCILVCKECIVLEHSTGLHELENVQSPGMTTSTGSTANESALQTLLADMRGKIGEIVGIAGNSDQNLTKVKLQYQKAHNELNETHQFFASMLDERKTELLKELETLYTAKVNSNNSWQQRSRDLIDKGLATCEAVERSPAPPSSLLTEALLLRKSLEQQLQTGIQEMQLPFEIEFMSNYQSIQAGVRNTFGYIRANSSDGGPTGMSLTSNGHGKQPPIARPTQSASNSSASSAGSGHHGHHQQSHHHGHHNHHQTAHHQQLQAQSSLHGLGLGLSGASLLDSSSSAGGAVGAFSNGGLLLGGRDRNALAVEQHFGELMPKRGGGGYTGSNGSATSAVAHYNPYEKWSNGGSDNLFSSVTSGVSGSSAVADAFASLSAVGGSVVSGAGAGGSTVSSESLLDLTNKLLSATIYPPKSQIKRQKMIYHCKFGEFGVMEGQFTEPSGVAVNAQNDIIVADTNNHRIQIFDKEGRFKFQFGECGKRDSQLLYPNRVAVVRNSGDIIVTERSPTHQIQIYNQYGQFVRKFGATILQHPRGVTVDNKGRIIVVECKVMRVIIFDQNGNVLHKFGCSKHLEFPNGVVVNDKQEIFISDNRAHCVKVFNYEGQYLRQIGGEGITNYPIGVGINSNGEILIADNHNNFNLTIFTQDGQLISALESKVKHAQCFDVALMDDGSVVLASKDYRLYIYRYVQLAPVGM</sequence>
<gene>
    <name evidence="17" type="primary">brat</name>
    <name evidence="17" type="ORF">CG10719</name>
</gene>
<name>BRAT_DROME</name>
<organism evidence="18">
    <name type="scientific">Drosophila melanogaster</name>
    <name type="common">Fruit fly</name>
    <dbReference type="NCBI Taxonomy" id="7227"/>
    <lineage>
        <taxon>Eukaryota</taxon>
        <taxon>Metazoa</taxon>
        <taxon>Ecdysozoa</taxon>
        <taxon>Arthropoda</taxon>
        <taxon>Hexapoda</taxon>
        <taxon>Insecta</taxon>
        <taxon>Pterygota</taxon>
        <taxon>Neoptera</taxon>
        <taxon>Endopterygota</taxon>
        <taxon>Diptera</taxon>
        <taxon>Brachycera</taxon>
        <taxon>Muscomorpha</taxon>
        <taxon>Ephydroidea</taxon>
        <taxon>Drosophilidae</taxon>
        <taxon>Drosophila</taxon>
        <taxon>Sophophora</taxon>
    </lineage>
</organism>
<feature type="chain" id="PRO_0000220368" description="Protein brain tumor">
    <location>
        <begin position="1"/>
        <end position="1037"/>
    </location>
</feature>
<feature type="repeat" description="NHL 1" evidence="2">
    <location>
        <begin position="767"/>
        <end position="810"/>
    </location>
</feature>
<feature type="repeat" description="NHL 2" evidence="2">
    <location>
        <begin position="814"/>
        <end position="859"/>
    </location>
</feature>
<feature type="repeat" description="NHL 3" evidence="2">
    <location>
        <begin position="860"/>
        <end position="901"/>
    </location>
</feature>
<feature type="repeat" description="NHL 4" evidence="2">
    <location>
        <begin position="902"/>
        <end position="944"/>
    </location>
</feature>
<feature type="repeat" description="NHL 5" evidence="2">
    <location>
        <begin position="945"/>
        <end position="988"/>
    </location>
</feature>
<feature type="zinc finger region" description="B box-type 1; atypical" evidence="1">
    <location>
        <begin position="174"/>
        <end position="222"/>
    </location>
</feature>
<feature type="zinc finger region" description="B box-type 2" evidence="1">
    <location>
        <begin position="323"/>
        <end position="366"/>
    </location>
</feature>
<feature type="region of interest" description="Disordered" evidence="3">
    <location>
        <begin position="29"/>
        <end position="63"/>
    </location>
</feature>
<feature type="region of interest" description="Disordered" evidence="3">
    <location>
        <begin position="159"/>
        <end position="178"/>
    </location>
</feature>
<feature type="region of interest" description="Disordered" evidence="3">
    <location>
        <begin position="543"/>
        <end position="606"/>
    </location>
</feature>
<feature type="compositionally biased region" description="Polar residues" evidence="3">
    <location>
        <begin position="31"/>
        <end position="42"/>
    </location>
</feature>
<feature type="compositionally biased region" description="Polar residues" evidence="3">
    <location>
        <begin position="54"/>
        <end position="63"/>
    </location>
</feature>
<feature type="compositionally biased region" description="Low complexity" evidence="3">
    <location>
        <begin position="159"/>
        <end position="175"/>
    </location>
</feature>
<feature type="compositionally biased region" description="Polar residues" evidence="3">
    <location>
        <begin position="543"/>
        <end position="554"/>
    </location>
</feature>
<feature type="compositionally biased region" description="Low complexity" evidence="3">
    <location>
        <begin position="565"/>
        <end position="577"/>
    </location>
</feature>
<feature type="compositionally biased region" description="Basic residues" evidence="3">
    <location>
        <begin position="579"/>
        <end position="598"/>
    </location>
</feature>
<feature type="binding site" evidence="1">
    <location>
        <position position="179"/>
    </location>
    <ligand>
        <name>Zn(2+)</name>
        <dbReference type="ChEBI" id="CHEBI:29105"/>
        <label>1</label>
    </ligand>
</feature>
<feature type="binding site" evidence="1">
    <location>
        <position position="182"/>
    </location>
    <ligand>
        <name>Zn(2+)</name>
        <dbReference type="ChEBI" id="CHEBI:29105"/>
        <label>1</label>
    </ligand>
</feature>
<feature type="binding site" evidence="1">
    <location>
        <position position="204"/>
    </location>
    <ligand>
        <name>Zn(2+)</name>
        <dbReference type="ChEBI" id="CHEBI:29105"/>
        <label>1</label>
    </ligand>
</feature>
<feature type="binding site" evidence="1">
    <location>
        <position position="208"/>
    </location>
    <ligand>
        <name>Zn(2+)</name>
        <dbReference type="ChEBI" id="CHEBI:29105"/>
        <label>1</label>
    </ligand>
</feature>
<feature type="binding site" evidence="1">
    <location>
        <position position="328"/>
    </location>
    <ligand>
        <name>Zn(2+)</name>
        <dbReference type="ChEBI" id="CHEBI:29105"/>
        <label>2</label>
    </ligand>
</feature>
<feature type="binding site" evidence="1">
    <location>
        <position position="331"/>
    </location>
    <ligand>
        <name>Zn(2+)</name>
        <dbReference type="ChEBI" id="CHEBI:29105"/>
        <label>2</label>
    </ligand>
</feature>
<feature type="binding site" evidence="1">
    <location>
        <position position="351"/>
    </location>
    <ligand>
        <name>Zn(2+)</name>
        <dbReference type="ChEBI" id="CHEBI:29105"/>
        <label>2</label>
    </ligand>
</feature>
<feature type="binding site" evidence="1">
    <location>
        <position position="356"/>
    </location>
    <ligand>
        <name>Zn(2+)</name>
        <dbReference type="ChEBI" id="CHEBI:29105"/>
        <label>2</label>
    </ligand>
</feature>
<feature type="mutagenesis site" description="In bratfs3; induces production of tumor-like neoplasms in the larval brain. Disrupts interaction with nanos and pum." evidence="4">
    <original>H</original>
    <variation>L</variation>
    <location>
        <position position="802"/>
    </location>
</feature>
<feature type="mutagenesis site" description="Disrupts recruitment by pum." evidence="7">
    <original>Y</original>
    <variation>A</variation>
    <location>
        <position position="829"/>
    </location>
</feature>
<feature type="mutagenesis site" description="Disrupts recruitment by pum." evidence="7">
    <original>R</original>
    <variation>A</variation>
    <location>
        <position position="847"/>
    </location>
</feature>
<feature type="mutagenesis site" description="Does not affect recruitment by pum." evidence="7">
    <original>Y</original>
    <variation>A</variation>
    <location>
        <position position="859"/>
    </location>
</feature>
<feature type="mutagenesis site" description="In bratts1; induces production of tumor-like neoplasms in the larval brain. Disrupts interaction with nanos and pum." evidence="4">
    <original>G</original>
    <variation>D</variation>
    <location>
        <position position="860"/>
    </location>
</feature>
<feature type="mutagenesis site" description="Disrupts recruitment by pum." evidence="7">
    <original>R</original>
    <variation>A</variation>
    <location>
        <position position="875"/>
    </location>
</feature>
<feature type="mutagenesis site" description="Does not affect recruitment by pum." evidence="7">
    <original>E</original>
    <variation>A</variation>
    <location>
        <position position="970"/>
    </location>
</feature>
<feature type="mutagenesis site" description="Does not affect recruitment by pum." evidence="7">
    <original>D</original>
    <variation>A</variation>
    <location>
        <position position="1012"/>
    </location>
</feature>
<feature type="sequence conflict" description="In Ref. 6; ABA86472." evidence="15" ref="6">
    <original>H</original>
    <variation>Y</variation>
    <location>
        <position position="591"/>
    </location>
</feature>
<feature type="sequence conflict" description="In Ref. 1; AAF13928/AAF13929." evidence="15" ref="1">
    <original>G</original>
    <variation>S</variation>
    <location>
        <position position="643"/>
    </location>
</feature>
<feature type="helix" evidence="21">
    <location>
        <begin position="383"/>
        <end position="402"/>
    </location>
</feature>
<feature type="helix" evidence="21">
    <location>
        <begin position="405"/>
        <end position="479"/>
    </location>
</feature>
<feature type="helix" evidence="21">
    <location>
        <begin position="485"/>
        <end position="503"/>
    </location>
</feature>
<feature type="strand" evidence="19">
    <location>
        <begin position="762"/>
        <end position="764"/>
    </location>
</feature>
<feature type="strand" evidence="19">
    <location>
        <begin position="766"/>
        <end position="770"/>
    </location>
</feature>
<feature type="strand" evidence="19">
    <location>
        <begin position="773"/>
        <end position="776"/>
    </location>
</feature>
<feature type="strand" evidence="20">
    <location>
        <begin position="779"/>
        <end position="781"/>
    </location>
</feature>
<feature type="strand" evidence="19">
    <location>
        <begin position="783"/>
        <end position="788"/>
    </location>
</feature>
<feature type="strand" evidence="19">
    <location>
        <begin position="794"/>
        <end position="798"/>
    </location>
</feature>
<feature type="helix" evidence="19">
    <location>
        <begin position="799"/>
        <end position="801"/>
    </location>
</feature>
<feature type="strand" evidence="19">
    <location>
        <begin position="803"/>
        <end position="807"/>
    </location>
</feature>
<feature type="strand" evidence="19">
    <location>
        <begin position="813"/>
        <end position="817"/>
    </location>
</feature>
<feature type="strand" evidence="19">
    <location>
        <begin position="820"/>
        <end position="823"/>
    </location>
</feature>
<feature type="strand" evidence="19">
    <location>
        <begin position="827"/>
        <end position="835"/>
    </location>
</feature>
<feature type="turn" evidence="19">
    <location>
        <begin position="837"/>
        <end position="839"/>
    </location>
</feature>
<feature type="strand" evidence="19">
    <location>
        <begin position="842"/>
        <end position="846"/>
    </location>
</feature>
<feature type="helix" evidence="19">
    <location>
        <begin position="848"/>
        <end position="850"/>
    </location>
</feature>
<feature type="strand" evidence="19">
    <location>
        <begin position="852"/>
        <end position="856"/>
    </location>
</feature>
<feature type="strand" evidence="19">
    <location>
        <begin position="862"/>
        <end position="866"/>
    </location>
</feature>
<feature type="turn" evidence="19">
    <location>
        <begin position="868"/>
        <end position="870"/>
    </location>
</feature>
<feature type="strand" evidence="19">
    <location>
        <begin position="874"/>
        <end position="879"/>
    </location>
</feature>
<feature type="strand" evidence="19">
    <location>
        <begin position="885"/>
        <end position="889"/>
    </location>
</feature>
<feature type="turn" evidence="19">
    <location>
        <begin position="890"/>
        <end position="893"/>
    </location>
</feature>
<feature type="strand" evidence="19">
    <location>
        <begin position="894"/>
        <end position="898"/>
    </location>
</feature>
<feature type="strand" evidence="19">
    <location>
        <begin position="904"/>
        <end position="909"/>
    </location>
</feature>
<feature type="turn" evidence="19">
    <location>
        <begin position="911"/>
        <end position="913"/>
    </location>
</feature>
<feature type="strand" evidence="19">
    <location>
        <begin position="915"/>
        <end position="922"/>
    </location>
</feature>
<feature type="strand" evidence="19">
    <location>
        <begin position="924"/>
        <end position="932"/>
    </location>
</feature>
<feature type="helix" evidence="19">
    <location>
        <begin position="933"/>
        <end position="935"/>
    </location>
</feature>
<feature type="strand" evidence="19">
    <location>
        <begin position="937"/>
        <end position="942"/>
    </location>
</feature>
<feature type="strand" evidence="19">
    <location>
        <begin position="947"/>
        <end position="952"/>
    </location>
</feature>
<feature type="turn" evidence="19">
    <location>
        <begin position="954"/>
        <end position="956"/>
    </location>
</feature>
<feature type="strand" evidence="19">
    <location>
        <begin position="959"/>
        <end position="965"/>
    </location>
</feature>
<feature type="strand" evidence="19">
    <location>
        <begin position="971"/>
        <end position="975"/>
    </location>
</feature>
<feature type="strand" evidence="19">
    <location>
        <begin position="977"/>
        <end position="979"/>
    </location>
</feature>
<feature type="strand" evidence="19">
    <location>
        <begin position="981"/>
        <end position="985"/>
    </location>
</feature>
<feature type="strand" evidence="19">
    <location>
        <begin position="991"/>
        <end position="999"/>
    </location>
</feature>
<feature type="strand" evidence="19">
    <location>
        <begin position="1004"/>
        <end position="1010"/>
    </location>
</feature>
<feature type="turn" evidence="19">
    <location>
        <begin position="1011"/>
        <end position="1013"/>
    </location>
</feature>
<feature type="strand" evidence="19">
    <location>
        <begin position="1014"/>
        <end position="1019"/>
    </location>
</feature>
<feature type="turn" evidence="19">
    <location>
        <begin position="1020"/>
        <end position="1022"/>
    </location>
</feature>
<feature type="strand" evidence="19">
    <location>
        <begin position="1023"/>
        <end position="1028"/>
    </location>
</feature>
<keyword id="KW-0002">3D-structure</keyword>
<keyword id="KW-0963">Cytoplasm</keyword>
<keyword id="KW-0479">Metal-binding</keyword>
<keyword id="KW-1185">Reference proteome</keyword>
<keyword id="KW-0677">Repeat</keyword>
<keyword id="KW-0678">Repressor</keyword>
<keyword id="KW-0810">Translation regulation</keyword>
<keyword id="KW-0862">Zinc</keyword>
<keyword id="KW-0863">Zinc-finger</keyword>
<dbReference type="EMBL" id="AF119332">
    <property type="protein sequence ID" value="AAF03086.1"/>
    <property type="molecule type" value="mRNA"/>
</dbReference>
<dbReference type="EMBL" id="AF195870">
    <property type="protein sequence ID" value="AAF13926.1"/>
    <property type="molecule type" value="Genomic_DNA"/>
</dbReference>
<dbReference type="EMBL" id="AF195871">
    <property type="protein sequence ID" value="AAF13927.1"/>
    <property type="molecule type" value="Genomic_DNA"/>
</dbReference>
<dbReference type="EMBL" id="AF195872">
    <property type="protein sequence ID" value="AAF13928.1"/>
    <property type="molecule type" value="Genomic_DNA"/>
</dbReference>
<dbReference type="EMBL" id="AF195873">
    <property type="protein sequence ID" value="AAF13929.1"/>
    <property type="molecule type" value="Genomic_DNA"/>
</dbReference>
<dbReference type="EMBL" id="AB022432">
    <property type="protein sequence ID" value="BAA82071.1"/>
    <property type="molecule type" value="mRNA"/>
</dbReference>
<dbReference type="EMBL" id="AE014134">
    <property type="protein sequence ID" value="AAN11027.1"/>
    <property type="molecule type" value="Genomic_DNA"/>
</dbReference>
<dbReference type="EMBL" id="AE014134">
    <property type="protein sequence ID" value="AAS64719.1"/>
    <property type="molecule type" value="Genomic_DNA"/>
</dbReference>
<dbReference type="EMBL" id="AY122207">
    <property type="protein sequence ID" value="AAM52719.1"/>
    <property type="molecule type" value="mRNA"/>
</dbReference>
<dbReference type="EMBL" id="AY129441">
    <property type="protein sequence ID" value="AAM76183.1"/>
    <property type="status" value="ALT_INIT"/>
    <property type="molecule type" value="mRNA"/>
</dbReference>
<dbReference type="EMBL" id="DQ138866">
    <property type="protein sequence ID" value="ABA86472.1"/>
    <property type="molecule type" value="Genomic_DNA"/>
</dbReference>
<dbReference type="RefSeq" id="NP_001286083.1">
    <property type="nucleotide sequence ID" value="NM_001299154.1"/>
</dbReference>
<dbReference type="RefSeq" id="NP_476945.1">
    <property type="nucleotide sequence ID" value="NM_057597.4"/>
</dbReference>
<dbReference type="RefSeq" id="NP_599129.1">
    <property type="nucleotide sequence ID" value="NM_134302.2"/>
</dbReference>
<dbReference type="RefSeq" id="NP_995726.1">
    <property type="nucleotide sequence ID" value="NM_206004.2"/>
</dbReference>
<dbReference type="PDB" id="1Q7F">
    <property type="method" value="X-ray"/>
    <property type="resolution" value="1.95 A"/>
    <property type="chains" value="A/B=756-1037"/>
</dbReference>
<dbReference type="PDB" id="4ZLR">
    <property type="method" value="X-ray"/>
    <property type="resolution" value="2.30 A"/>
    <property type="chains" value="A/B=756-1037"/>
</dbReference>
<dbReference type="PDB" id="5EX7">
    <property type="method" value="X-ray"/>
    <property type="resolution" value="2.60 A"/>
    <property type="chains" value="A=758-1037"/>
</dbReference>
<dbReference type="PDB" id="6J9R">
    <property type="method" value="X-ray"/>
    <property type="resolution" value="2.50 A"/>
    <property type="chains" value="A/B=376-511"/>
</dbReference>
<dbReference type="PDBsum" id="1Q7F"/>
<dbReference type="PDBsum" id="4ZLR"/>
<dbReference type="PDBsum" id="5EX7"/>
<dbReference type="PDBsum" id="6J9R"/>
<dbReference type="SASBDB" id="Q8MQJ9"/>
<dbReference type="SMR" id="Q8MQJ9"/>
<dbReference type="BioGRID" id="61181">
    <property type="interactions" value="58"/>
</dbReference>
<dbReference type="DIP" id="DIP-37857N"/>
<dbReference type="FunCoup" id="Q8MQJ9">
    <property type="interactions" value="202"/>
</dbReference>
<dbReference type="IntAct" id="Q8MQJ9">
    <property type="interactions" value="5"/>
</dbReference>
<dbReference type="MINT" id="Q8MQJ9"/>
<dbReference type="STRING" id="7227.FBpp0307610"/>
<dbReference type="GlyGen" id="Q8MQJ9">
    <property type="glycosylation" value="1 site"/>
</dbReference>
<dbReference type="PaxDb" id="7227-FBpp0293081"/>
<dbReference type="DNASU" id="35197"/>
<dbReference type="EnsemblMetazoa" id="FBtr0081158">
    <property type="protein sequence ID" value="FBpp0080702"/>
    <property type="gene ID" value="FBgn0010300"/>
</dbReference>
<dbReference type="EnsemblMetazoa" id="FBtr0081159">
    <property type="protein sequence ID" value="FBpp0080703"/>
    <property type="gene ID" value="FBgn0010300"/>
</dbReference>
<dbReference type="EnsemblMetazoa" id="FBtr0081160">
    <property type="protein sequence ID" value="FBpp0089239"/>
    <property type="gene ID" value="FBgn0010300"/>
</dbReference>
<dbReference type="EnsemblMetazoa" id="FBtr0344846">
    <property type="protein sequence ID" value="FBpp0311161"/>
    <property type="gene ID" value="FBgn0010300"/>
</dbReference>
<dbReference type="GeneID" id="35197"/>
<dbReference type="KEGG" id="dme:Dmel_CG10719"/>
<dbReference type="UCSC" id="CG10719-RC">
    <property type="organism name" value="d. melanogaster"/>
</dbReference>
<dbReference type="AGR" id="FB:FBgn0010300"/>
<dbReference type="CTD" id="35197"/>
<dbReference type="FlyBase" id="FBgn0010300">
    <property type="gene designation" value="brat"/>
</dbReference>
<dbReference type="VEuPathDB" id="VectorBase:FBgn0010300"/>
<dbReference type="eggNOG" id="KOG2177">
    <property type="taxonomic scope" value="Eukaryota"/>
</dbReference>
<dbReference type="GeneTree" id="ENSGT00940000170685"/>
<dbReference type="HOGENOM" id="CLU_007697_0_0_1"/>
<dbReference type="InParanoid" id="Q8MQJ9"/>
<dbReference type="OrthoDB" id="342730at2759"/>
<dbReference type="PhylomeDB" id="Q8MQJ9"/>
<dbReference type="Reactome" id="R-DME-6798695">
    <property type="pathway name" value="Neutrophil degranulation"/>
</dbReference>
<dbReference type="SignaLink" id="Q8MQJ9"/>
<dbReference type="BioGRID-ORCS" id="35197">
    <property type="hits" value="0 hits in 3 CRISPR screens"/>
</dbReference>
<dbReference type="ChiTaRS" id="brat">
    <property type="organism name" value="fly"/>
</dbReference>
<dbReference type="EvolutionaryTrace" id="Q8MQJ9"/>
<dbReference type="GenomeRNAi" id="35197"/>
<dbReference type="PRO" id="PR:Q8MQJ9"/>
<dbReference type="Proteomes" id="UP000000803">
    <property type="component" value="Chromosome 2L"/>
</dbReference>
<dbReference type="Bgee" id="FBgn0010300">
    <property type="expression patterns" value="Expressed in polar follicle cell (Drosophila) in ovary and 317 other cell types or tissues"/>
</dbReference>
<dbReference type="ExpressionAtlas" id="Q8MQJ9">
    <property type="expression patterns" value="baseline and differential"/>
</dbReference>
<dbReference type="GO" id="GO:0045179">
    <property type="term" value="C:apical cortex"/>
    <property type="evidence" value="ECO:0000314"/>
    <property type="project" value="FlyBase"/>
</dbReference>
<dbReference type="GO" id="GO:0045180">
    <property type="term" value="C:basal cortex"/>
    <property type="evidence" value="ECO:0000314"/>
    <property type="project" value="FlyBase"/>
</dbReference>
<dbReference type="GO" id="GO:0005737">
    <property type="term" value="C:cytoplasm"/>
    <property type="evidence" value="ECO:0000314"/>
    <property type="project" value="UniProtKB"/>
</dbReference>
<dbReference type="GO" id="GO:0005829">
    <property type="term" value="C:cytosol"/>
    <property type="evidence" value="ECO:0000314"/>
    <property type="project" value="FlyBase"/>
</dbReference>
<dbReference type="GO" id="GO:0043025">
    <property type="term" value="C:neuronal cell body"/>
    <property type="evidence" value="ECO:0000314"/>
    <property type="project" value="FlyBase"/>
</dbReference>
<dbReference type="GO" id="GO:0003730">
    <property type="term" value="F:mRNA 3'-UTR binding"/>
    <property type="evidence" value="ECO:0000315"/>
    <property type="project" value="FlyBase"/>
</dbReference>
<dbReference type="GO" id="GO:0045182">
    <property type="term" value="F:translation regulator activity"/>
    <property type="evidence" value="ECO:0000304"/>
    <property type="project" value="FlyBase"/>
</dbReference>
<dbReference type="GO" id="GO:0030371">
    <property type="term" value="F:translation repressor activity"/>
    <property type="evidence" value="ECO:0000315"/>
    <property type="project" value="UniProtKB"/>
</dbReference>
<dbReference type="GO" id="GO:0008270">
    <property type="term" value="F:zinc ion binding"/>
    <property type="evidence" value="ECO:0007669"/>
    <property type="project" value="UniProtKB-KW"/>
</dbReference>
<dbReference type="GO" id="GO:0008356">
    <property type="term" value="P:asymmetric cell division"/>
    <property type="evidence" value="ECO:0000315"/>
    <property type="project" value="FlyBase"/>
</dbReference>
<dbReference type="GO" id="GO:0055060">
    <property type="term" value="P:asymmetric neuroblast division resulting in ganglion mother cell formation"/>
    <property type="evidence" value="ECO:0000315"/>
    <property type="project" value="FlyBase"/>
</dbReference>
<dbReference type="GO" id="GO:0007420">
    <property type="term" value="P:brain development"/>
    <property type="evidence" value="ECO:0000315"/>
    <property type="project" value="FlyBase"/>
</dbReference>
<dbReference type="GO" id="GO:0007402">
    <property type="term" value="P:ganglion mother cell fate determination"/>
    <property type="evidence" value="ECO:0000315"/>
    <property type="project" value="FlyBase"/>
</dbReference>
<dbReference type="GO" id="GO:0008285">
    <property type="term" value="P:negative regulation of cell population proliferation"/>
    <property type="evidence" value="ECO:0000315"/>
    <property type="project" value="FlyBase"/>
</dbReference>
<dbReference type="GO" id="GO:0010629">
    <property type="term" value="P:negative regulation of gene expression"/>
    <property type="evidence" value="ECO:0000315"/>
    <property type="project" value="FlyBase"/>
</dbReference>
<dbReference type="GO" id="GO:0007406">
    <property type="term" value="P:negative regulation of neuroblast proliferation"/>
    <property type="evidence" value="ECO:0000315"/>
    <property type="project" value="UniProtKB"/>
</dbReference>
<dbReference type="GO" id="GO:0017148">
    <property type="term" value="P:negative regulation of translation"/>
    <property type="evidence" value="ECO:0000315"/>
    <property type="project" value="FlyBase"/>
</dbReference>
<dbReference type="GO" id="GO:0061351">
    <property type="term" value="P:neural precursor cell proliferation"/>
    <property type="evidence" value="ECO:0000315"/>
    <property type="project" value="UniProtKB"/>
</dbReference>
<dbReference type="GO" id="GO:0014019">
    <property type="term" value="P:neuroblast development"/>
    <property type="evidence" value="ECO:0000315"/>
    <property type="project" value="UniProtKB"/>
</dbReference>
<dbReference type="GO" id="GO:0014016">
    <property type="term" value="P:neuroblast differentiation"/>
    <property type="evidence" value="ECO:0000315"/>
    <property type="project" value="FlyBase"/>
</dbReference>
<dbReference type="GO" id="GO:0007400">
    <property type="term" value="P:neuroblast fate determination"/>
    <property type="evidence" value="ECO:0000315"/>
    <property type="project" value="FlyBase"/>
</dbReference>
<dbReference type="GO" id="GO:0007405">
    <property type="term" value="P:neuroblast proliferation"/>
    <property type="evidence" value="ECO:0000315"/>
    <property type="project" value="UniProtKB"/>
</dbReference>
<dbReference type="GO" id="GO:0030182">
    <property type="term" value="P:neuron differentiation"/>
    <property type="evidence" value="ECO:0000315"/>
    <property type="project" value="FlyBase"/>
</dbReference>
<dbReference type="GO" id="GO:0048477">
    <property type="term" value="P:oogenesis"/>
    <property type="evidence" value="ECO:0007001"/>
    <property type="project" value="FlyBase"/>
</dbReference>
<dbReference type="GO" id="GO:1902692">
    <property type="term" value="P:regulation of neuroblast proliferation"/>
    <property type="evidence" value="ECO:0000316"/>
    <property type="project" value="UniProtKB"/>
</dbReference>
<dbReference type="GO" id="GO:0050767">
    <property type="term" value="P:regulation of neurogenesis"/>
    <property type="evidence" value="ECO:0000315"/>
    <property type="project" value="FlyBase"/>
</dbReference>
<dbReference type="GO" id="GO:0008582">
    <property type="term" value="P:regulation of synaptic assembly at neuromuscular junction"/>
    <property type="evidence" value="ECO:0000315"/>
    <property type="project" value="FlyBase"/>
</dbReference>
<dbReference type="GO" id="GO:1900242">
    <property type="term" value="P:regulation of synaptic vesicle endocytosis"/>
    <property type="evidence" value="ECO:0000315"/>
    <property type="project" value="FlyBase"/>
</dbReference>
<dbReference type="GO" id="GO:0006417">
    <property type="term" value="P:regulation of translation"/>
    <property type="evidence" value="ECO:0000304"/>
    <property type="project" value="FlyBase"/>
</dbReference>
<dbReference type="GO" id="GO:0009303">
    <property type="term" value="P:rRNA transcription"/>
    <property type="evidence" value="ECO:0000315"/>
    <property type="project" value="UniProtKB"/>
</dbReference>
<dbReference type="GO" id="GO:0035282">
    <property type="term" value="P:segmentation"/>
    <property type="evidence" value="ECO:0000315"/>
    <property type="project" value="FlyBase"/>
</dbReference>
<dbReference type="GO" id="GO:0007419">
    <property type="term" value="P:ventral cord development"/>
    <property type="evidence" value="ECO:0007001"/>
    <property type="project" value="FlyBase"/>
</dbReference>
<dbReference type="CDD" id="cd19813">
    <property type="entry name" value="Bbox1_BRAT-like"/>
    <property type="match status" value="1"/>
</dbReference>
<dbReference type="CDD" id="cd19798">
    <property type="entry name" value="Bbox2_BRAT-like"/>
    <property type="match status" value="1"/>
</dbReference>
<dbReference type="CDD" id="cd20482">
    <property type="entry name" value="CC_brat-like"/>
    <property type="match status" value="1"/>
</dbReference>
<dbReference type="CDD" id="cd14959">
    <property type="entry name" value="NHL_brat_like"/>
    <property type="match status" value="1"/>
</dbReference>
<dbReference type="FunFam" id="2.120.10.30:FF:000031">
    <property type="entry name" value="B-box type zinc finger protein ncl-1"/>
    <property type="match status" value="1"/>
</dbReference>
<dbReference type="FunFam" id="3.30.160.60:FF:002696">
    <property type="entry name" value="Brain tumor, isoform E"/>
    <property type="match status" value="1"/>
</dbReference>
<dbReference type="Gene3D" id="3.30.160.60">
    <property type="entry name" value="Classic Zinc Finger"/>
    <property type="match status" value="1"/>
</dbReference>
<dbReference type="Gene3D" id="2.120.10.30">
    <property type="entry name" value="TolB, C-terminal domain"/>
    <property type="match status" value="1"/>
</dbReference>
<dbReference type="InterPro" id="IPR011042">
    <property type="entry name" value="6-blade_b-propeller_TolB-like"/>
</dbReference>
<dbReference type="InterPro" id="IPR001258">
    <property type="entry name" value="NHL_repeat"/>
</dbReference>
<dbReference type="InterPro" id="IPR050952">
    <property type="entry name" value="TRIM-NHL_E3_ligases"/>
</dbReference>
<dbReference type="InterPro" id="IPR000315">
    <property type="entry name" value="Znf_B-box"/>
</dbReference>
<dbReference type="PANTHER" id="PTHR24104:SF41">
    <property type="entry name" value="BRAIN TUMOR PROTEIN"/>
    <property type="match status" value="1"/>
</dbReference>
<dbReference type="PANTHER" id="PTHR24104">
    <property type="entry name" value="E3 UBIQUITIN-PROTEIN LIGASE NHLRC1-RELATED"/>
    <property type="match status" value="1"/>
</dbReference>
<dbReference type="Pfam" id="PF01436">
    <property type="entry name" value="NHL"/>
    <property type="match status" value="5"/>
</dbReference>
<dbReference type="Pfam" id="PF00643">
    <property type="entry name" value="zf-B_box"/>
    <property type="match status" value="1"/>
</dbReference>
<dbReference type="SMART" id="SM00336">
    <property type="entry name" value="BBOX"/>
    <property type="match status" value="2"/>
</dbReference>
<dbReference type="SUPFAM" id="SSF57845">
    <property type="entry name" value="B-box zinc-binding domain"/>
    <property type="match status" value="1"/>
</dbReference>
<dbReference type="SUPFAM" id="SSF101898">
    <property type="entry name" value="NHL repeat"/>
    <property type="match status" value="1"/>
</dbReference>
<dbReference type="PROSITE" id="PS51125">
    <property type="entry name" value="NHL"/>
    <property type="match status" value="5"/>
</dbReference>
<dbReference type="PROSITE" id="PS50119">
    <property type="entry name" value="ZF_BBOX"/>
    <property type="match status" value="2"/>
</dbReference>
<proteinExistence type="evidence at protein level"/>